<organism>
    <name type="scientific">Mycobacterium leprae (strain TN)</name>
    <dbReference type="NCBI Taxonomy" id="272631"/>
    <lineage>
        <taxon>Bacteria</taxon>
        <taxon>Bacillati</taxon>
        <taxon>Actinomycetota</taxon>
        <taxon>Actinomycetes</taxon>
        <taxon>Mycobacteriales</taxon>
        <taxon>Mycobacteriaceae</taxon>
        <taxon>Mycobacterium</taxon>
    </lineage>
</organism>
<accession>Q49752</accession>
<proteinExistence type="inferred from homology"/>
<reference key="1">
    <citation type="submission" date="1994-03" db="EMBL/GenBank/DDBJ databases">
        <authorList>
            <person name="Smith D.R."/>
            <person name="Robison K."/>
        </authorList>
    </citation>
    <scope>NUCLEOTIDE SEQUENCE [GENOMIC DNA]</scope>
</reference>
<reference key="2">
    <citation type="journal article" date="2001" name="Nature">
        <title>Massive gene decay in the leprosy bacillus.</title>
        <authorList>
            <person name="Cole S.T."/>
            <person name="Eiglmeier K."/>
            <person name="Parkhill J."/>
            <person name="James K.D."/>
            <person name="Thomson N.R."/>
            <person name="Wheeler P.R."/>
            <person name="Honore N."/>
            <person name="Garnier T."/>
            <person name="Churcher C.M."/>
            <person name="Harris D.E."/>
            <person name="Mungall K.L."/>
            <person name="Basham D."/>
            <person name="Brown D."/>
            <person name="Chillingworth T."/>
            <person name="Connor R."/>
            <person name="Davies R.M."/>
            <person name="Devlin K."/>
            <person name="Duthoy S."/>
            <person name="Feltwell T."/>
            <person name="Fraser A."/>
            <person name="Hamlin N."/>
            <person name="Holroyd S."/>
            <person name="Hornsby T."/>
            <person name="Jagels K."/>
            <person name="Lacroix C."/>
            <person name="Maclean J."/>
            <person name="Moule S."/>
            <person name="Murphy L.D."/>
            <person name="Oliver K."/>
            <person name="Quail M.A."/>
            <person name="Rajandream M.A."/>
            <person name="Rutherford K.M."/>
            <person name="Rutter S."/>
            <person name="Seeger K."/>
            <person name="Simon S."/>
            <person name="Simmonds M."/>
            <person name="Skelton J."/>
            <person name="Squares R."/>
            <person name="Squares S."/>
            <person name="Stevens K."/>
            <person name="Taylor K."/>
            <person name="Whitehead S."/>
            <person name="Woodward J.R."/>
            <person name="Barrell B.G."/>
        </authorList>
    </citation>
    <scope>NUCLEOTIDE SEQUENCE [LARGE SCALE GENOMIC DNA]</scope>
    <source>
        <strain>TN</strain>
    </source>
</reference>
<comment type="function">
    <text evidence="1">Single strand-specific metallo-endoribonuclease involved in late-stage 70S ribosome quality control and in maturation of the 3' terminus of the 16S rRNA.</text>
</comment>
<comment type="cofactor">
    <cofactor evidence="1">
        <name>Zn(2+)</name>
        <dbReference type="ChEBI" id="CHEBI:29105"/>
    </cofactor>
    <text evidence="1">Binds 1 zinc ion.</text>
</comment>
<comment type="subcellular location">
    <subcellularLocation>
        <location evidence="1">Cytoplasm</location>
    </subcellularLocation>
</comment>
<comment type="similarity">
    <text evidence="1">Belongs to the endoribonuclease YbeY family.</text>
</comment>
<comment type="sequence caution" evidence="2">
    <conflict type="erroneous initiation">
        <sequence resource="EMBL-CDS" id="AAA17156"/>
    </conflict>
</comment>
<sequence length="178" mass="19750">MSVEVSNESGFDVSEVELVSVARFVIIKMDVNPAAELSMVLLDTAAMADLHMRWMDLPGPTDVMSFPMDEFEPGGRPDAAEPGPSMLGDIVLCPEFAAQQAAAEGHSLGHELALLTIHGVLHLLGYDHGEPDEEKEMFALQGRLLEEWVAEQVRAYQHDRQNEKDCRLLYKSGYFGYL</sequence>
<evidence type="ECO:0000255" key="1">
    <source>
        <dbReference type="HAMAP-Rule" id="MF_00009"/>
    </source>
</evidence>
<evidence type="ECO:0000305" key="2"/>
<feature type="chain" id="PRO_0000102488" description="Endoribonuclease YbeY">
    <location>
        <begin position="1"/>
        <end position="178"/>
    </location>
</feature>
<feature type="binding site" evidence="1">
    <location>
        <position position="118"/>
    </location>
    <ligand>
        <name>Zn(2+)</name>
        <dbReference type="ChEBI" id="CHEBI:29105"/>
        <note>catalytic</note>
    </ligand>
</feature>
<feature type="binding site" evidence="1">
    <location>
        <position position="122"/>
    </location>
    <ligand>
        <name>Zn(2+)</name>
        <dbReference type="ChEBI" id="CHEBI:29105"/>
        <note>catalytic</note>
    </ligand>
</feature>
<feature type="binding site" evidence="1">
    <location>
        <position position="128"/>
    </location>
    <ligand>
        <name>Zn(2+)</name>
        <dbReference type="ChEBI" id="CHEBI:29105"/>
        <note>catalytic</note>
    </ligand>
</feature>
<protein>
    <recommendedName>
        <fullName evidence="1">Endoribonuclease YbeY</fullName>
        <ecNumber evidence="1">3.1.-.-</ecNumber>
    </recommendedName>
</protein>
<dbReference type="EC" id="3.1.-.-" evidence="1"/>
<dbReference type="EMBL" id="U00016">
    <property type="protein sequence ID" value="AAA17156.1"/>
    <property type="status" value="ALT_INIT"/>
    <property type="molecule type" value="Genomic_DNA"/>
</dbReference>
<dbReference type="EMBL" id="AL583919">
    <property type="protein sequence ID" value="CAC30136.1"/>
    <property type="molecule type" value="Genomic_DNA"/>
</dbReference>
<dbReference type="PIR" id="D86987">
    <property type="entry name" value="D86987"/>
</dbReference>
<dbReference type="PIR" id="S72588">
    <property type="entry name" value="S72588"/>
</dbReference>
<dbReference type="RefSeq" id="NP_301521.1">
    <property type="nucleotide sequence ID" value="NC_002677.1"/>
</dbReference>
<dbReference type="RefSeq" id="WP_010907845.1">
    <property type="nucleotide sequence ID" value="NC_002677.1"/>
</dbReference>
<dbReference type="SMR" id="Q49752"/>
<dbReference type="STRING" id="272631.gene:17574449"/>
<dbReference type="KEGG" id="mle:ML0628"/>
<dbReference type="PATRIC" id="fig|272631.5.peg.1109"/>
<dbReference type="Leproma" id="ML0628"/>
<dbReference type="eggNOG" id="COG0319">
    <property type="taxonomic scope" value="Bacteria"/>
</dbReference>
<dbReference type="HOGENOM" id="CLU_106710_3_2_11"/>
<dbReference type="OrthoDB" id="9807740at2"/>
<dbReference type="Proteomes" id="UP000000806">
    <property type="component" value="Chromosome"/>
</dbReference>
<dbReference type="GO" id="GO:0005737">
    <property type="term" value="C:cytoplasm"/>
    <property type="evidence" value="ECO:0007669"/>
    <property type="project" value="UniProtKB-SubCell"/>
</dbReference>
<dbReference type="GO" id="GO:0004222">
    <property type="term" value="F:metalloendopeptidase activity"/>
    <property type="evidence" value="ECO:0007669"/>
    <property type="project" value="InterPro"/>
</dbReference>
<dbReference type="GO" id="GO:0004521">
    <property type="term" value="F:RNA endonuclease activity"/>
    <property type="evidence" value="ECO:0007669"/>
    <property type="project" value="UniProtKB-UniRule"/>
</dbReference>
<dbReference type="GO" id="GO:0008270">
    <property type="term" value="F:zinc ion binding"/>
    <property type="evidence" value="ECO:0007669"/>
    <property type="project" value="UniProtKB-UniRule"/>
</dbReference>
<dbReference type="GO" id="GO:0006364">
    <property type="term" value="P:rRNA processing"/>
    <property type="evidence" value="ECO:0007669"/>
    <property type="project" value="UniProtKB-UniRule"/>
</dbReference>
<dbReference type="Gene3D" id="3.40.390.30">
    <property type="entry name" value="Metalloproteases ('zincins'), catalytic domain"/>
    <property type="match status" value="1"/>
</dbReference>
<dbReference type="HAMAP" id="MF_00009">
    <property type="entry name" value="Endoribonucl_YbeY"/>
    <property type="match status" value="1"/>
</dbReference>
<dbReference type="InterPro" id="IPR023091">
    <property type="entry name" value="MetalPrtase_cat_dom_sf_prd"/>
</dbReference>
<dbReference type="InterPro" id="IPR002036">
    <property type="entry name" value="YbeY"/>
</dbReference>
<dbReference type="InterPro" id="IPR020549">
    <property type="entry name" value="YbeY_CS"/>
</dbReference>
<dbReference type="NCBIfam" id="TIGR00043">
    <property type="entry name" value="rRNA maturation RNase YbeY"/>
    <property type="match status" value="1"/>
</dbReference>
<dbReference type="PANTHER" id="PTHR46986">
    <property type="entry name" value="ENDORIBONUCLEASE YBEY, CHLOROPLASTIC"/>
    <property type="match status" value="1"/>
</dbReference>
<dbReference type="PANTHER" id="PTHR46986:SF1">
    <property type="entry name" value="ENDORIBONUCLEASE YBEY, CHLOROPLASTIC"/>
    <property type="match status" value="1"/>
</dbReference>
<dbReference type="Pfam" id="PF02130">
    <property type="entry name" value="YbeY"/>
    <property type="match status" value="1"/>
</dbReference>
<dbReference type="SUPFAM" id="SSF55486">
    <property type="entry name" value="Metalloproteases ('zincins'), catalytic domain"/>
    <property type="match status" value="1"/>
</dbReference>
<dbReference type="PROSITE" id="PS01306">
    <property type="entry name" value="UPF0054"/>
    <property type="match status" value="1"/>
</dbReference>
<name>YBEY_MYCLE</name>
<keyword id="KW-0963">Cytoplasm</keyword>
<keyword id="KW-0255">Endonuclease</keyword>
<keyword id="KW-0378">Hydrolase</keyword>
<keyword id="KW-0479">Metal-binding</keyword>
<keyword id="KW-0540">Nuclease</keyword>
<keyword id="KW-1185">Reference proteome</keyword>
<keyword id="KW-0690">Ribosome biogenesis</keyword>
<keyword id="KW-0698">rRNA processing</keyword>
<keyword id="KW-0862">Zinc</keyword>
<gene>
    <name evidence="1" type="primary">ybeY</name>
    <name type="ordered locus">ML0628</name>
    <name type="ORF">B1937_F1_21</name>
</gene>